<comment type="function">
    <text>Orphan receptor. May regulate nociceptor function and/or development, including the sensation or modulation of pain.</text>
</comment>
<comment type="subcellular location">
    <subcellularLocation>
        <location>Cell membrane</location>
        <topology>Multi-pass membrane protein</topology>
    </subcellularLocation>
</comment>
<comment type="similarity">
    <text evidence="2">Belongs to the G-protein coupled receptor 1 family. Mas subfamily.</text>
</comment>
<comment type="sequence caution" evidence="3">
    <conflict type="erroneous initiation">
        <sequence resource="EMBL-CDS" id="AAI04890"/>
    </conflict>
    <text>Truncated N-terminus.</text>
</comment>
<comment type="sequence caution" evidence="3">
    <conflict type="erroneous initiation">
        <sequence resource="EMBL-CDS" id="AAI12204"/>
    </conflict>
    <text>Truncated N-terminus.</text>
</comment>
<protein>
    <recommendedName>
        <fullName>Mas-related G-protein coupled receptor member E</fullName>
    </recommendedName>
    <alternativeName>
        <fullName>G-protein coupled receptor 167</fullName>
    </alternativeName>
</protein>
<feature type="chain" id="PRO_0000069760" description="Mas-related G-protein coupled receptor member E">
    <location>
        <begin position="1"/>
        <end position="312"/>
    </location>
</feature>
<feature type="topological domain" description="Extracellular" evidence="1">
    <location>
        <begin position="1"/>
        <end position="20"/>
    </location>
</feature>
<feature type="transmembrane region" description="Helical; Name=1" evidence="1">
    <location>
        <begin position="21"/>
        <end position="41"/>
    </location>
</feature>
<feature type="topological domain" description="Cytoplasmic" evidence="1">
    <location>
        <begin position="42"/>
        <end position="59"/>
    </location>
</feature>
<feature type="transmembrane region" description="Helical; Name=2" evidence="1">
    <location>
        <begin position="60"/>
        <end position="80"/>
    </location>
</feature>
<feature type="topological domain" description="Extracellular" evidence="1">
    <location>
        <begin position="81"/>
        <end position="106"/>
    </location>
</feature>
<feature type="transmembrane region" description="Helical; Name=3" evidence="1">
    <location>
        <begin position="107"/>
        <end position="127"/>
    </location>
</feature>
<feature type="topological domain" description="Cytoplasmic" evidence="1">
    <location>
        <begin position="128"/>
        <end position="141"/>
    </location>
</feature>
<feature type="transmembrane region" description="Helical; Name=4" evidence="1">
    <location>
        <begin position="142"/>
        <end position="162"/>
    </location>
</feature>
<feature type="topological domain" description="Extracellular" evidence="1">
    <location>
        <begin position="163"/>
        <end position="176"/>
    </location>
</feature>
<feature type="transmembrane region" description="Helical; Name=5" evidence="1">
    <location>
        <begin position="177"/>
        <end position="197"/>
    </location>
</feature>
<feature type="topological domain" description="Cytoplasmic" evidence="1">
    <location>
        <begin position="198"/>
        <end position="217"/>
    </location>
</feature>
<feature type="transmembrane region" description="Helical; Name=6" evidence="1">
    <location>
        <begin position="218"/>
        <end position="238"/>
    </location>
</feature>
<feature type="topological domain" description="Extracellular" evidence="1">
    <location>
        <begin position="239"/>
        <end position="241"/>
    </location>
</feature>
<feature type="transmembrane region" description="Helical; Name=7" evidence="1">
    <location>
        <begin position="242"/>
        <end position="262"/>
    </location>
</feature>
<feature type="topological domain" description="Cytoplasmic" evidence="1">
    <location>
        <begin position="263"/>
        <end position="312"/>
    </location>
</feature>
<feature type="sequence variant" id="VAR_059325" description="In dbSNP:rs12295710.">
    <original>G</original>
    <variation>S</variation>
    <location>
        <position position="16"/>
    </location>
</feature>
<feature type="sequence variant" id="VAR_059326" description="In dbSNP:rs4391795.">
    <original>G</original>
    <variation>S</variation>
    <location>
        <position position="160"/>
    </location>
</feature>
<reference key="1">
    <citation type="journal article" date="2004" name="Genome Res.">
        <title>The status, quality, and expansion of the NIH full-length cDNA project: the Mammalian Gene Collection (MGC).</title>
        <authorList>
            <consortium name="The MGC Project Team"/>
        </authorList>
    </citation>
    <scope>NUCLEOTIDE SEQUENCE [LARGE SCALE MRNA]</scope>
</reference>
<reference key="2">
    <citation type="journal article" date="2003" name="Proc. Natl. Acad. Sci. U.S.A.">
        <title>The G protein-coupled receptor repertoires of human and mouse.</title>
        <authorList>
            <person name="Vassilatis D.K."/>
            <person name="Hohmann J.G."/>
            <person name="Zeng H."/>
            <person name="Li F."/>
            <person name="Ranchalis J.E."/>
            <person name="Mortrud M.T."/>
            <person name="Brown A."/>
            <person name="Rodriguez S.S."/>
            <person name="Weller J.R."/>
            <person name="Wright A.C."/>
            <person name="Bergmann J.E."/>
            <person name="Gaitanaris G.A."/>
        </authorList>
    </citation>
    <scope>NUCLEOTIDE SEQUENCE [LARGE SCALE MRNA] OF 58-202</scope>
</reference>
<accession>Q86SM8</accession>
<accession>Q2M1V7</accession>
<sequence>MMEPREAGQHVGAANGAQEDVAFNLIILSLTEGLGLGGLLGNGAVLWLLSSNVYRNPFAIYLLDVACADLIFLGCHMVAIVPDLLQGRLDFPGFVQTSLATLRFFCYIVGLSLLAAVSVEQCLAALFPAWYSCRRPRHLTTCVCALTWALCLLLHLLLSGACTQFFGEPSRHLCRTLWLVAAVLLALLCCTMCGASLMLLLRVERGPQRPPPRGFPGLILLTVLLFLFCGLPFGIYWLSRNLLWYIPHYFYHFSFLMAAVHCAAKPVVYFCLGSAQGRRLPLRLVLQRALGDEAELGAVRETSRRGLVDIAA</sequence>
<proteinExistence type="evidence at transcript level"/>
<dbReference type="EMBL" id="BC104889">
    <property type="protein sequence ID" value="AAI04890.1"/>
    <property type="status" value="ALT_INIT"/>
    <property type="molecule type" value="mRNA"/>
</dbReference>
<dbReference type="EMBL" id="BC112203">
    <property type="protein sequence ID" value="AAI12204.1"/>
    <property type="status" value="ALT_INIT"/>
    <property type="molecule type" value="mRNA"/>
</dbReference>
<dbReference type="EMBL" id="AY255572">
    <property type="protein sequence ID" value="AAO85084.1"/>
    <property type="molecule type" value="mRNA"/>
</dbReference>
<dbReference type="CCDS" id="CCDS41603.2"/>
<dbReference type="RefSeq" id="NP_001034254.2">
    <property type="nucleotide sequence ID" value="NM_001039165.4"/>
</dbReference>
<dbReference type="SMR" id="Q86SM8"/>
<dbReference type="BioGRID" id="125519">
    <property type="interactions" value="1"/>
</dbReference>
<dbReference type="FunCoup" id="Q86SM8">
    <property type="interactions" value="44"/>
</dbReference>
<dbReference type="STRING" id="9606.ENSP00000374482"/>
<dbReference type="ChEMBL" id="CHEMBL4523882"/>
<dbReference type="PhosphoSitePlus" id="Q86SM8"/>
<dbReference type="BioMuta" id="MRGPRE"/>
<dbReference type="DMDM" id="115502418"/>
<dbReference type="PaxDb" id="9606-ENSP00000374482"/>
<dbReference type="PeptideAtlas" id="Q86SM8"/>
<dbReference type="ProteomicsDB" id="69602"/>
<dbReference type="Antibodypedia" id="23328">
    <property type="antibodies" value="102 antibodies from 23 providers"/>
</dbReference>
<dbReference type="DNASU" id="116534"/>
<dbReference type="Ensembl" id="ENST00000389832.7">
    <property type="protein sequence ID" value="ENSP00000374482.6"/>
    <property type="gene ID" value="ENSG00000184350.11"/>
</dbReference>
<dbReference type="GeneID" id="116534"/>
<dbReference type="KEGG" id="hsa:116534"/>
<dbReference type="MANE-Select" id="ENST00000389832.7">
    <property type="protein sequence ID" value="ENSP00000374482.6"/>
    <property type="RefSeq nucleotide sequence ID" value="NM_001039165.4"/>
    <property type="RefSeq protein sequence ID" value="NP_001034254.2"/>
</dbReference>
<dbReference type="AGR" id="HGNC:30694"/>
<dbReference type="CTD" id="116534"/>
<dbReference type="DisGeNET" id="116534"/>
<dbReference type="GeneCards" id="MRGPRE"/>
<dbReference type="HGNC" id="HGNC:30694">
    <property type="gene designation" value="MRGPRE"/>
</dbReference>
<dbReference type="HPA" id="ENSG00000184350">
    <property type="expression patterns" value="Not detected"/>
</dbReference>
<dbReference type="MIM" id="607232">
    <property type="type" value="gene"/>
</dbReference>
<dbReference type="neXtProt" id="NX_Q86SM8"/>
<dbReference type="OpenTargets" id="ENSG00000184350"/>
<dbReference type="PharmGKB" id="PA134939296"/>
<dbReference type="VEuPathDB" id="HostDB:ENSG00000184350"/>
<dbReference type="eggNOG" id="ENOG502TKZN">
    <property type="taxonomic scope" value="Eukaryota"/>
</dbReference>
<dbReference type="GeneTree" id="ENSGT01030000234639"/>
<dbReference type="HOGENOM" id="CLU_009579_4_1_1"/>
<dbReference type="InParanoid" id="Q86SM8"/>
<dbReference type="OMA" id="GCHMVAI"/>
<dbReference type="OrthoDB" id="9896011at2759"/>
<dbReference type="PAN-GO" id="Q86SM8">
    <property type="GO annotations" value="2 GO annotations based on evolutionary models"/>
</dbReference>
<dbReference type="PhylomeDB" id="Q86SM8"/>
<dbReference type="TreeFam" id="TF336336"/>
<dbReference type="PathwayCommons" id="Q86SM8"/>
<dbReference type="BioGRID-ORCS" id="116534">
    <property type="hits" value="15 hits in 1027 CRISPR screens"/>
</dbReference>
<dbReference type="GeneWiki" id="MRGPRE"/>
<dbReference type="GenomeRNAi" id="116534"/>
<dbReference type="Pharos" id="Q86SM8">
    <property type="development level" value="Tbio"/>
</dbReference>
<dbReference type="PRO" id="PR:Q86SM8"/>
<dbReference type="Proteomes" id="UP000005640">
    <property type="component" value="Chromosome 11"/>
</dbReference>
<dbReference type="RNAct" id="Q86SM8">
    <property type="molecule type" value="protein"/>
</dbReference>
<dbReference type="Bgee" id="ENSG00000184350">
    <property type="expression patterns" value="Expressed in dorsal root ganglion and 93 other cell types or tissues"/>
</dbReference>
<dbReference type="ExpressionAtlas" id="Q86SM8">
    <property type="expression patterns" value="baseline and differential"/>
</dbReference>
<dbReference type="GO" id="GO:0005886">
    <property type="term" value="C:plasma membrane"/>
    <property type="evidence" value="ECO:0000318"/>
    <property type="project" value="GO_Central"/>
</dbReference>
<dbReference type="GO" id="GO:0004930">
    <property type="term" value="F:G protein-coupled receptor activity"/>
    <property type="evidence" value="ECO:0000318"/>
    <property type="project" value="GO_Central"/>
</dbReference>
<dbReference type="GO" id="GO:0007186">
    <property type="term" value="P:G protein-coupled receptor signaling pathway"/>
    <property type="evidence" value="ECO:0000318"/>
    <property type="project" value="GO_Central"/>
</dbReference>
<dbReference type="FunFam" id="1.20.1070.10:FF:000193">
    <property type="entry name" value="Mas-related G-protein coupled receptor member E"/>
    <property type="match status" value="1"/>
</dbReference>
<dbReference type="Gene3D" id="1.20.1070.10">
    <property type="entry name" value="Rhodopsin 7-helix transmembrane proteins"/>
    <property type="match status" value="1"/>
</dbReference>
<dbReference type="InterPro" id="IPR000276">
    <property type="entry name" value="GPCR_Rhodpsn"/>
</dbReference>
<dbReference type="InterPro" id="IPR017452">
    <property type="entry name" value="GPCR_Rhodpsn_7TM"/>
</dbReference>
<dbReference type="InterPro" id="IPR026230">
    <property type="entry name" value="MRGPCRE"/>
</dbReference>
<dbReference type="InterPro" id="IPR026234">
    <property type="entry name" value="MRGPCRFAMILY"/>
</dbReference>
<dbReference type="PANTHER" id="PTHR11334">
    <property type="entry name" value="MAS-RELATED G-PROTEIN COUPLED RECEPTOR"/>
    <property type="match status" value="1"/>
</dbReference>
<dbReference type="PANTHER" id="PTHR11334:SF26">
    <property type="entry name" value="MAS-RELATED G-PROTEIN COUPLED RECEPTOR MEMBER E"/>
    <property type="match status" value="1"/>
</dbReference>
<dbReference type="Pfam" id="PF00001">
    <property type="entry name" value="7tm_1"/>
    <property type="match status" value="1"/>
</dbReference>
<dbReference type="PRINTS" id="PR00237">
    <property type="entry name" value="GPCRRHODOPSN"/>
</dbReference>
<dbReference type="PRINTS" id="PR02111">
    <property type="entry name" value="MRGPCRE"/>
</dbReference>
<dbReference type="PRINTS" id="PR02108">
    <property type="entry name" value="MRGPCRFAMILY"/>
</dbReference>
<dbReference type="SUPFAM" id="SSF81321">
    <property type="entry name" value="Family A G protein-coupled receptor-like"/>
    <property type="match status" value="1"/>
</dbReference>
<dbReference type="PROSITE" id="PS50262">
    <property type="entry name" value="G_PROTEIN_RECEP_F1_2"/>
    <property type="match status" value="1"/>
</dbReference>
<organism>
    <name type="scientific">Homo sapiens</name>
    <name type="common">Human</name>
    <dbReference type="NCBI Taxonomy" id="9606"/>
    <lineage>
        <taxon>Eukaryota</taxon>
        <taxon>Metazoa</taxon>
        <taxon>Chordata</taxon>
        <taxon>Craniata</taxon>
        <taxon>Vertebrata</taxon>
        <taxon>Euteleostomi</taxon>
        <taxon>Mammalia</taxon>
        <taxon>Eutheria</taxon>
        <taxon>Euarchontoglires</taxon>
        <taxon>Primates</taxon>
        <taxon>Haplorrhini</taxon>
        <taxon>Catarrhini</taxon>
        <taxon>Hominidae</taxon>
        <taxon>Homo</taxon>
    </lineage>
</organism>
<evidence type="ECO:0000255" key="1"/>
<evidence type="ECO:0000255" key="2">
    <source>
        <dbReference type="PROSITE-ProRule" id="PRU00521"/>
    </source>
</evidence>
<evidence type="ECO:0000305" key="3"/>
<gene>
    <name type="primary">MRGPRE</name>
    <name type="synonym">GPR167</name>
    <name type="synonym">MRGE</name>
</gene>
<keyword id="KW-1003">Cell membrane</keyword>
<keyword id="KW-0297">G-protein coupled receptor</keyword>
<keyword id="KW-0472">Membrane</keyword>
<keyword id="KW-0675">Receptor</keyword>
<keyword id="KW-1185">Reference proteome</keyword>
<keyword id="KW-0807">Transducer</keyword>
<keyword id="KW-0812">Transmembrane</keyword>
<keyword id="KW-1133">Transmembrane helix</keyword>
<name>MRGRE_HUMAN</name>